<geneLocation type="chloroplast"/>
<organism>
    <name type="scientific">Mesostigma viride</name>
    <name type="common">Green alga</name>
    <dbReference type="NCBI Taxonomy" id="41882"/>
    <lineage>
        <taxon>Eukaryota</taxon>
        <taxon>Viridiplantae</taxon>
        <taxon>Streptophyta</taxon>
        <taxon>Mesostigmatophyceae</taxon>
        <taxon>Mesostigmatales</taxon>
        <taxon>Mesostigmataceae</taxon>
        <taxon>Mesostigma</taxon>
    </lineage>
</organism>
<evidence type="ECO:0000255" key="1">
    <source>
        <dbReference type="HAMAP-Rule" id="MF_00828"/>
    </source>
</evidence>
<protein>
    <recommendedName>
        <fullName evidence="1">Photosystem I reaction center subunit XII</fullName>
    </recommendedName>
    <alternativeName>
        <fullName evidence="1">PSI-M</fullName>
    </alternativeName>
</protein>
<keyword id="KW-0150">Chloroplast</keyword>
<keyword id="KW-0472">Membrane</keyword>
<keyword id="KW-0602">Photosynthesis</keyword>
<keyword id="KW-0603">Photosystem I</keyword>
<keyword id="KW-0934">Plastid</keyword>
<keyword id="KW-0793">Thylakoid</keyword>
<keyword id="KW-0812">Transmembrane</keyword>
<keyword id="KW-1133">Transmembrane helix</keyword>
<dbReference type="EMBL" id="AF166114">
    <property type="protein sequence ID" value="AAF43829.1"/>
    <property type="molecule type" value="Genomic_DNA"/>
</dbReference>
<dbReference type="RefSeq" id="NP_038388.1">
    <property type="nucleotide sequence ID" value="NC_002186.1"/>
</dbReference>
<dbReference type="SMR" id="Q9MUS2"/>
<dbReference type="GeneID" id="800863"/>
<dbReference type="GO" id="GO:0009535">
    <property type="term" value="C:chloroplast thylakoid membrane"/>
    <property type="evidence" value="ECO:0007669"/>
    <property type="project" value="UniProtKB-SubCell"/>
</dbReference>
<dbReference type="GO" id="GO:0009522">
    <property type="term" value="C:photosystem I"/>
    <property type="evidence" value="ECO:0007669"/>
    <property type="project" value="UniProtKB-KW"/>
</dbReference>
<dbReference type="GO" id="GO:0015979">
    <property type="term" value="P:photosynthesis"/>
    <property type="evidence" value="ECO:0007669"/>
    <property type="project" value="UniProtKB-UniRule"/>
</dbReference>
<dbReference type="HAMAP" id="MF_00828">
    <property type="entry name" value="PSI_PsaM"/>
    <property type="match status" value="1"/>
</dbReference>
<dbReference type="InterPro" id="IPR010010">
    <property type="entry name" value="PSI_PsaM"/>
</dbReference>
<dbReference type="InterPro" id="IPR037279">
    <property type="entry name" value="PSI_PsaM_sf"/>
</dbReference>
<dbReference type="NCBIfam" id="TIGR03053">
    <property type="entry name" value="PS_I_psaM"/>
    <property type="match status" value="1"/>
</dbReference>
<dbReference type="Pfam" id="PF07465">
    <property type="entry name" value="PsaM"/>
    <property type="match status" value="1"/>
</dbReference>
<dbReference type="SUPFAM" id="SSF81548">
    <property type="entry name" value="Subunit XII of photosystem I reaction centre, PsaM"/>
    <property type="match status" value="1"/>
</dbReference>
<name>PSAM_MESVI</name>
<proteinExistence type="inferred from homology"/>
<accession>Q9MUS2</accession>
<comment type="subcellular location">
    <subcellularLocation>
        <location evidence="1">Plastid</location>
        <location evidence="1">Chloroplast thylakoid membrane</location>
        <topology evidence="1">Single-pass membrane protein</topology>
    </subcellularLocation>
</comment>
<comment type="similarity">
    <text evidence="1">Belongs to the PsaM family.</text>
</comment>
<gene>
    <name evidence="1" type="primary">psaM</name>
</gene>
<reference key="1">
    <citation type="journal article" date="2000" name="Nature">
        <title>Ancestral chloroplast genome in Mesostigma viride reveals an early branch of green plant evolution.</title>
        <authorList>
            <person name="Lemieux C."/>
            <person name="Otis C."/>
            <person name="Turmel M."/>
        </authorList>
    </citation>
    <scope>NUCLEOTIDE SEQUENCE [LARGE SCALE GENOMIC DNA]</scope>
    <source>
        <strain>NIES-296 / KY-14 / CCMP 2046</strain>
    </source>
</reference>
<sequence>MISDIQIMVALFAALFTGILALRLGTELYK</sequence>
<feature type="chain" id="PRO_0000207765" description="Photosystem I reaction center subunit XII">
    <location>
        <begin position="1"/>
        <end position="30"/>
    </location>
</feature>
<feature type="transmembrane region" description="Helical" evidence="1">
    <location>
        <begin position="7"/>
        <end position="26"/>
    </location>
</feature>